<protein>
    <recommendedName>
        <fullName evidence="1">Formate-dependent phosphoribosylglycinamide formyltransferase</fullName>
        <ecNumber evidence="1">6.3.1.21</ecNumber>
    </recommendedName>
    <alternativeName>
        <fullName evidence="1">5'-phosphoribosylglycinamide transformylase 2</fullName>
    </alternativeName>
    <alternativeName>
        <fullName evidence="1">Formate-dependent GAR transformylase</fullName>
    </alternativeName>
    <alternativeName>
        <fullName evidence="1">GAR transformylase 2</fullName>
        <shortName evidence="1">GART 2</shortName>
    </alternativeName>
    <alternativeName>
        <fullName evidence="1">Non-folate glycinamide ribonucleotide transformylase</fullName>
    </alternativeName>
    <alternativeName>
        <fullName evidence="1">Phosphoribosylglycinamide formyltransferase 2</fullName>
    </alternativeName>
</protein>
<keyword id="KW-0067">ATP-binding</keyword>
<keyword id="KW-0436">Ligase</keyword>
<keyword id="KW-0460">Magnesium</keyword>
<keyword id="KW-0479">Metal-binding</keyword>
<keyword id="KW-0547">Nucleotide-binding</keyword>
<keyword id="KW-0658">Purine biosynthesis</keyword>
<accession>C1DDZ2</accession>
<feature type="chain" id="PRO_1000215833" description="Formate-dependent phosphoribosylglycinamide formyltransferase">
    <location>
        <begin position="1"/>
        <end position="393"/>
    </location>
</feature>
<feature type="domain" description="ATP-grasp" evidence="1">
    <location>
        <begin position="119"/>
        <end position="308"/>
    </location>
</feature>
<feature type="binding site" evidence="1">
    <location>
        <begin position="22"/>
        <end position="23"/>
    </location>
    <ligand>
        <name>N(1)-(5-phospho-beta-D-ribosyl)glycinamide</name>
        <dbReference type="ChEBI" id="CHEBI:143788"/>
    </ligand>
</feature>
<feature type="binding site" evidence="1">
    <location>
        <position position="82"/>
    </location>
    <ligand>
        <name>N(1)-(5-phospho-beta-D-ribosyl)glycinamide</name>
        <dbReference type="ChEBI" id="CHEBI:143788"/>
    </ligand>
</feature>
<feature type="binding site" evidence="1">
    <location>
        <position position="114"/>
    </location>
    <ligand>
        <name>ATP</name>
        <dbReference type="ChEBI" id="CHEBI:30616"/>
    </ligand>
</feature>
<feature type="binding site" evidence="1">
    <location>
        <position position="155"/>
    </location>
    <ligand>
        <name>ATP</name>
        <dbReference type="ChEBI" id="CHEBI:30616"/>
    </ligand>
</feature>
<feature type="binding site" evidence="1">
    <location>
        <begin position="160"/>
        <end position="165"/>
    </location>
    <ligand>
        <name>ATP</name>
        <dbReference type="ChEBI" id="CHEBI:30616"/>
    </ligand>
</feature>
<feature type="binding site" evidence="1">
    <location>
        <begin position="195"/>
        <end position="198"/>
    </location>
    <ligand>
        <name>ATP</name>
        <dbReference type="ChEBI" id="CHEBI:30616"/>
    </ligand>
</feature>
<feature type="binding site" evidence="1">
    <location>
        <position position="203"/>
    </location>
    <ligand>
        <name>ATP</name>
        <dbReference type="ChEBI" id="CHEBI:30616"/>
    </ligand>
</feature>
<feature type="binding site" evidence="1">
    <location>
        <position position="267"/>
    </location>
    <ligand>
        <name>Mg(2+)</name>
        <dbReference type="ChEBI" id="CHEBI:18420"/>
    </ligand>
</feature>
<feature type="binding site" evidence="1">
    <location>
        <position position="279"/>
    </location>
    <ligand>
        <name>Mg(2+)</name>
        <dbReference type="ChEBI" id="CHEBI:18420"/>
    </ligand>
</feature>
<feature type="binding site" evidence="1">
    <location>
        <position position="286"/>
    </location>
    <ligand>
        <name>N(1)-(5-phospho-beta-D-ribosyl)glycinamide</name>
        <dbReference type="ChEBI" id="CHEBI:143788"/>
    </ligand>
</feature>
<feature type="binding site" evidence="1">
    <location>
        <position position="356"/>
    </location>
    <ligand>
        <name>N(1)-(5-phospho-beta-D-ribosyl)glycinamide</name>
        <dbReference type="ChEBI" id="CHEBI:143788"/>
    </ligand>
</feature>
<feature type="binding site" evidence="1">
    <location>
        <begin position="363"/>
        <end position="364"/>
    </location>
    <ligand>
        <name>N(1)-(5-phospho-beta-D-ribosyl)glycinamide</name>
        <dbReference type="ChEBI" id="CHEBI:143788"/>
    </ligand>
</feature>
<dbReference type="EC" id="6.3.1.21" evidence="1"/>
<dbReference type="EMBL" id="CP001157">
    <property type="protein sequence ID" value="ACO80100.1"/>
    <property type="molecule type" value="Genomic_DNA"/>
</dbReference>
<dbReference type="RefSeq" id="WP_012702475.1">
    <property type="nucleotide sequence ID" value="NC_012560.1"/>
</dbReference>
<dbReference type="SMR" id="C1DDZ2"/>
<dbReference type="STRING" id="322710.Avin_39610"/>
<dbReference type="EnsemblBacteria" id="ACO80100">
    <property type="protein sequence ID" value="ACO80100"/>
    <property type="gene ID" value="Avin_39610"/>
</dbReference>
<dbReference type="GeneID" id="88186915"/>
<dbReference type="KEGG" id="avn:Avin_39610"/>
<dbReference type="eggNOG" id="COG0027">
    <property type="taxonomic scope" value="Bacteria"/>
</dbReference>
<dbReference type="HOGENOM" id="CLU_011534_1_3_6"/>
<dbReference type="OrthoDB" id="9804625at2"/>
<dbReference type="UniPathway" id="UPA00074">
    <property type="reaction ID" value="UER00127"/>
</dbReference>
<dbReference type="Proteomes" id="UP000002424">
    <property type="component" value="Chromosome"/>
</dbReference>
<dbReference type="GO" id="GO:0005829">
    <property type="term" value="C:cytosol"/>
    <property type="evidence" value="ECO:0007669"/>
    <property type="project" value="TreeGrafter"/>
</dbReference>
<dbReference type="GO" id="GO:0005524">
    <property type="term" value="F:ATP binding"/>
    <property type="evidence" value="ECO:0007669"/>
    <property type="project" value="UniProtKB-UniRule"/>
</dbReference>
<dbReference type="GO" id="GO:0000287">
    <property type="term" value="F:magnesium ion binding"/>
    <property type="evidence" value="ECO:0007669"/>
    <property type="project" value="InterPro"/>
</dbReference>
<dbReference type="GO" id="GO:0043815">
    <property type="term" value="F:phosphoribosylglycinamide formyltransferase 2 activity"/>
    <property type="evidence" value="ECO:0007669"/>
    <property type="project" value="UniProtKB-UniRule"/>
</dbReference>
<dbReference type="GO" id="GO:0004644">
    <property type="term" value="F:phosphoribosylglycinamide formyltransferase activity"/>
    <property type="evidence" value="ECO:0007669"/>
    <property type="project" value="InterPro"/>
</dbReference>
<dbReference type="GO" id="GO:0006189">
    <property type="term" value="P:'de novo' IMP biosynthetic process"/>
    <property type="evidence" value="ECO:0007669"/>
    <property type="project" value="UniProtKB-UniRule"/>
</dbReference>
<dbReference type="FunFam" id="3.30.1490.20:FF:000013">
    <property type="entry name" value="Formate-dependent phosphoribosylglycinamide formyltransferase"/>
    <property type="match status" value="1"/>
</dbReference>
<dbReference type="FunFam" id="3.30.470.20:FF:000027">
    <property type="entry name" value="Formate-dependent phosphoribosylglycinamide formyltransferase"/>
    <property type="match status" value="1"/>
</dbReference>
<dbReference type="FunFam" id="3.40.50.20:FF:000007">
    <property type="entry name" value="Formate-dependent phosphoribosylglycinamide formyltransferase"/>
    <property type="match status" value="1"/>
</dbReference>
<dbReference type="Gene3D" id="3.40.50.20">
    <property type="match status" value="1"/>
</dbReference>
<dbReference type="Gene3D" id="3.30.1490.20">
    <property type="entry name" value="ATP-grasp fold, A domain"/>
    <property type="match status" value="1"/>
</dbReference>
<dbReference type="Gene3D" id="3.30.470.20">
    <property type="entry name" value="ATP-grasp fold, B domain"/>
    <property type="match status" value="1"/>
</dbReference>
<dbReference type="HAMAP" id="MF_01643">
    <property type="entry name" value="PurT"/>
    <property type="match status" value="1"/>
</dbReference>
<dbReference type="InterPro" id="IPR011761">
    <property type="entry name" value="ATP-grasp"/>
</dbReference>
<dbReference type="InterPro" id="IPR003135">
    <property type="entry name" value="ATP-grasp_carboxylate-amine"/>
</dbReference>
<dbReference type="InterPro" id="IPR013815">
    <property type="entry name" value="ATP_grasp_subdomain_1"/>
</dbReference>
<dbReference type="InterPro" id="IPR016185">
    <property type="entry name" value="PreATP-grasp_dom_sf"/>
</dbReference>
<dbReference type="InterPro" id="IPR005862">
    <property type="entry name" value="PurT"/>
</dbReference>
<dbReference type="InterPro" id="IPR054350">
    <property type="entry name" value="PurT/PurK_preATP-grasp"/>
</dbReference>
<dbReference type="InterPro" id="IPR048740">
    <property type="entry name" value="PurT_C"/>
</dbReference>
<dbReference type="NCBIfam" id="NF006766">
    <property type="entry name" value="PRK09288.1"/>
    <property type="match status" value="1"/>
</dbReference>
<dbReference type="NCBIfam" id="TIGR01142">
    <property type="entry name" value="purT"/>
    <property type="match status" value="1"/>
</dbReference>
<dbReference type="PANTHER" id="PTHR43055">
    <property type="entry name" value="FORMATE-DEPENDENT PHOSPHORIBOSYLGLYCINAMIDE FORMYLTRANSFERASE"/>
    <property type="match status" value="1"/>
</dbReference>
<dbReference type="PANTHER" id="PTHR43055:SF1">
    <property type="entry name" value="FORMATE-DEPENDENT PHOSPHORIBOSYLGLYCINAMIDE FORMYLTRANSFERASE"/>
    <property type="match status" value="1"/>
</dbReference>
<dbReference type="Pfam" id="PF02222">
    <property type="entry name" value="ATP-grasp"/>
    <property type="match status" value="1"/>
</dbReference>
<dbReference type="Pfam" id="PF21244">
    <property type="entry name" value="PurT_C"/>
    <property type="match status" value="1"/>
</dbReference>
<dbReference type="Pfam" id="PF22660">
    <property type="entry name" value="RS_preATP-grasp-like"/>
    <property type="match status" value="1"/>
</dbReference>
<dbReference type="SUPFAM" id="SSF56059">
    <property type="entry name" value="Glutathione synthetase ATP-binding domain-like"/>
    <property type="match status" value="1"/>
</dbReference>
<dbReference type="SUPFAM" id="SSF52440">
    <property type="entry name" value="PreATP-grasp domain"/>
    <property type="match status" value="1"/>
</dbReference>
<dbReference type="PROSITE" id="PS50975">
    <property type="entry name" value="ATP_GRASP"/>
    <property type="match status" value="1"/>
</dbReference>
<proteinExistence type="inferred from homology"/>
<organism>
    <name type="scientific">Azotobacter vinelandii (strain DJ / ATCC BAA-1303)</name>
    <dbReference type="NCBI Taxonomy" id="322710"/>
    <lineage>
        <taxon>Bacteria</taxon>
        <taxon>Pseudomonadati</taxon>
        <taxon>Pseudomonadota</taxon>
        <taxon>Gammaproteobacteria</taxon>
        <taxon>Pseudomonadales</taxon>
        <taxon>Pseudomonadaceae</taxon>
        <taxon>Azotobacter</taxon>
    </lineage>
</organism>
<sequence>MSRIGTPLSPGATRVLLCGSGELGKEVVIELQRFGVEVIAVDRYADAPAMQVAHRSHVINMLDGAALRALIEQERPHYIVPEIEAIATATLVELESEGFTVIPSARAANLTMNREGIRRLAAEELGLPTSPYRFADSFEEYRAAAEALGFPCVVKPIMSSSGKGQSLLKGPEQLQAAWDYAQEGGRAGKGRVIVEGFIDFDYEITLLTVRHAGETTFCAPIGHRQEKGDYQESWQPQAMSTTAQAESERIARTVTEALGGRGLFGVELFVKGDQVWFSEVSPRPHDTGLVTLISQDLSEFALHARAILGLPIPAIRQFGPAASAVILVEGQSREVGFANLGQALAEPDTALRLFGKPEVAGQRRMGVALARDVSVETARQKATRAAQAVEVQL</sequence>
<name>PURT_AZOVD</name>
<reference key="1">
    <citation type="journal article" date="2009" name="J. Bacteriol.">
        <title>Genome sequence of Azotobacter vinelandii, an obligate aerobe specialized to support diverse anaerobic metabolic processes.</title>
        <authorList>
            <person name="Setubal J.C."/>
            <person name="Dos Santos P."/>
            <person name="Goldman B.S."/>
            <person name="Ertesvaag H."/>
            <person name="Espin G."/>
            <person name="Rubio L.M."/>
            <person name="Valla S."/>
            <person name="Almeida N.F."/>
            <person name="Balasubramanian D."/>
            <person name="Cromes L."/>
            <person name="Curatti L."/>
            <person name="Du Z."/>
            <person name="Godsy E."/>
            <person name="Goodner B."/>
            <person name="Hellner-Burris K."/>
            <person name="Hernandez J.A."/>
            <person name="Houmiel K."/>
            <person name="Imperial J."/>
            <person name="Kennedy C."/>
            <person name="Larson T.J."/>
            <person name="Latreille P."/>
            <person name="Ligon L.S."/>
            <person name="Lu J."/>
            <person name="Maerk M."/>
            <person name="Miller N.M."/>
            <person name="Norton S."/>
            <person name="O'Carroll I.P."/>
            <person name="Paulsen I."/>
            <person name="Raulfs E.C."/>
            <person name="Roemer R."/>
            <person name="Rosser J."/>
            <person name="Segura D."/>
            <person name="Slater S."/>
            <person name="Stricklin S.L."/>
            <person name="Studholme D.J."/>
            <person name="Sun J."/>
            <person name="Viana C.J."/>
            <person name="Wallin E."/>
            <person name="Wang B."/>
            <person name="Wheeler C."/>
            <person name="Zhu H."/>
            <person name="Dean D.R."/>
            <person name="Dixon R."/>
            <person name="Wood D."/>
        </authorList>
    </citation>
    <scope>NUCLEOTIDE SEQUENCE [LARGE SCALE GENOMIC DNA]</scope>
    <source>
        <strain>DJ / ATCC BAA-1303</strain>
    </source>
</reference>
<comment type="function">
    <text evidence="1">Involved in the de novo purine biosynthesis. Catalyzes the transfer of formate to 5-phospho-ribosyl-glycinamide (GAR), producing 5-phospho-ribosyl-N-formylglycinamide (FGAR). Formate is provided by PurU via hydrolysis of 10-formyl-tetrahydrofolate.</text>
</comment>
<comment type="catalytic activity">
    <reaction evidence="1">
        <text>N(1)-(5-phospho-beta-D-ribosyl)glycinamide + formate + ATP = N(2)-formyl-N(1)-(5-phospho-beta-D-ribosyl)glycinamide + ADP + phosphate + H(+)</text>
        <dbReference type="Rhea" id="RHEA:24829"/>
        <dbReference type="ChEBI" id="CHEBI:15378"/>
        <dbReference type="ChEBI" id="CHEBI:15740"/>
        <dbReference type="ChEBI" id="CHEBI:30616"/>
        <dbReference type="ChEBI" id="CHEBI:43474"/>
        <dbReference type="ChEBI" id="CHEBI:143788"/>
        <dbReference type="ChEBI" id="CHEBI:147286"/>
        <dbReference type="ChEBI" id="CHEBI:456216"/>
        <dbReference type="EC" id="6.3.1.21"/>
    </reaction>
    <physiologicalReaction direction="left-to-right" evidence="1">
        <dbReference type="Rhea" id="RHEA:24830"/>
    </physiologicalReaction>
</comment>
<comment type="pathway">
    <text evidence="1">Purine metabolism; IMP biosynthesis via de novo pathway; N(2)-formyl-N(1)-(5-phospho-D-ribosyl)glycinamide from N(1)-(5-phospho-D-ribosyl)glycinamide (formate route): step 1/1.</text>
</comment>
<comment type="subunit">
    <text evidence="1">Homodimer.</text>
</comment>
<comment type="similarity">
    <text evidence="1">Belongs to the PurK/PurT family.</text>
</comment>
<evidence type="ECO:0000255" key="1">
    <source>
        <dbReference type="HAMAP-Rule" id="MF_01643"/>
    </source>
</evidence>
<gene>
    <name evidence="1" type="primary">purT</name>
    <name type="ordered locus">Avin_39610</name>
</gene>